<comment type="function">
    <text evidence="5">May act as a catecholamine-responsive trans-membrane electron transporter.</text>
</comment>
<comment type="cofactor">
    <cofactor evidence="1">
        <name>heme b</name>
        <dbReference type="ChEBI" id="CHEBI:60344"/>
    </cofactor>
    <text evidence="1">Binds 2 heme b groups non-covalently.</text>
</comment>
<comment type="subcellular location">
    <subcellularLocation>
        <location evidence="7">Membrane</location>
        <topology evidence="7">Multi-pass membrane protein</topology>
    </subcellularLocation>
</comment>
<comment type="domain">
    <text evidence="5 6">DOMON domain could bind catecholamines and thereby could regulate the cytochrome b561 domain function (PubMed:15022831). DOMON domain could bind one heme b (PubMed:19386804).</text>
</comment>
<comment type="sequence caution" evidence="7">
    <conflict type="erroneous gene model prediction">
        <sequence resource="EMBL-CDS" id="AAF13075"/>
    </conflict>
</comment>
<dbReference type="EMBL" id="AC009176">
    <property type="protein sequence ID" value="AAF13075.1"/>
    <property type="status" value="ALT_SEQ"/>
    <property type="molecule type" value="Genomic_DNA"/>
</dbReference>
<dbReference type="EMBL" id="CP002686">
    <property type="protein sequence ID" value="AEE74567.1"/>
    <property type="molecule type" value="Genomic_DNA"/>
</dbReference>
<dbReference type="EMBL" id="AK228175">
    <property type="protein sequence ID" value="BAF00131.1"/>
    <property type="molecule type" value="mRNA"/>
</dbReference>
<dbReference type="RefSeq" id="NP_566313.2">
    <property type="nucleotide sequence ID" value="NM_111636.3"/>
</dbReference>
<dbReference type="SMR" id="Q0WRW8"/>
<dbReference type="BioGRID" id="5283">
    <property type="interactions" value="3"/>
</dbReference>
<dbReference type="FunCoup" id="Q0WRW8">
    <property type="interactions" value="180"/>
</dbReference>
<dbReference type="STRING" id="3702.Q0WRW8"/>
<dbReference type="TCDB" id="5.B.2.2.2">
    <property type="family name" value="the eukaryotic cytochrome b561 (cytb561) family"/>
</dbReference>
<dbReference type="iPTMnet" id="Q0WRW8"/>
<dbReference type="PaxDb" id="3702-AT3G07570.1"/>
<dbReference type="ProteomicsDB" id="241193"/>
<dbReference type="EnsemblPlants" id="AT3G07570.1">
    <property type="protein sequence ID" value="AT3G07570.1"/>
    <property type="gene ID" value="AT3G07570"/>
</dbReference>
<dbReference type="GeneID" id="819948"/>
<dbReference type="Gramene" id="AT3G07570.1">
    <property type="protein sequence ID" value="AT3G07570.1"/>
    <property type="gene ID" value="AT3G07570"/>
</dbReference>
<dbReference type="KEGG" id="ath:AT3G07570"/>
<dbReference type="Araport" id="AT3G07570"/>
<dbReference type="TAIR" id="AT3G07570"/>
<dbReference type="eggNOG" id="KOG4293">
    <property type="taxonomic scope" value="Eukaryota"/>
</dbReference>
<dbReference type="HOGENOM" id="CLU_036675_0_2_1"/>
<dbReference type="InParanoid" id="Q0WRW8"/>
<dbReference type="OMA" id="WNWYHYS"/>
<dbReference type="PRO" id="PR:Q0WRW8"/>
<dbReference type="Proteomes" id="UP000006548">
    <property type="component" value="Chromosome 3"/>
</dbReference>
<dbReference type="ExpressionAtlas" id="Q0WRW8">
    <property type="expression patterns" value="baseline and differential"/>
</dbReference>
<dbReference type="GO" id="GO:0016020">
    <property type="term" value="C:membrane"/>
    <property type="evidence" value="ECO:0007669"/>
    <property type="project" value="UniProtKB-SubCell"/>
</dbReference>
<dbReference type="GO" id="GO:0046872">
    <property type="term" value="F:metal ion binding"/>
    <property type="evidence" value="ECO:0007669"/>
    <property type="project" value="UniProtKB-KW"/>
</dbReference>
<dbReference type="CDD" id="cd08760">
    <property type="entry name" value="Cyt_b561_FRRS1_like"/>
    <property type="match status" value="1"/>
</dbReference>
<dbReference type="CDD" id="cd09631">
    <property type="entry name" value="DOMON_DOH"/>
    <property type="match status" value="1"/>
</dbReference>
<dbReference type="Gene3D" id="1.20.120.1770">
    <property type="match status" value="1"/>
</dbReference>
<dbReference type="InterPro" id="IPR006593">
    <property type="entry name" value="Cyt_b561/ferric_Rdtase_TM"/>
</dbReference>
<dbReference type="InterPro" id="IPR045266">
    <property type="entry name" value="DOH_DOMON"/>
</dbReference>
<dbReference type="InterPro" id="IPR005018">
    <property type="entry name" value="DOMON_domain"/>
</dbReference>
<dbReference type="InterPro" id="IPR017214">
    <property type="entry name" value="UCP037471"/>
</dbReference>
<dbReference type="PANTHER" id="PTHR23130">
    <property type="entry name" value="CYTOCHROME B561 AND DOMON DOMAIN-CONTAINING PROTEIN"/>
    <property type="match status" value="1"/>
</dbReference>
<dbReference type="PANTHER" id="PTHR23130:SF171">
    <property type="entry name" value="OS01G0895300 PROTEIN"/>
    <property type="match status" value="1"/>
</dbReference>
<dbReference type="Pfam" id="PF03188">
    <property type="entry name" value="Cytochrom_B561"/>
    <property type="match status" value="1"/>
</dbReference>
<dbReference type="PIRSF" id="PIRSF037471">
    <property type="entry name" value="UCP037471"/>
    <property type="match status" value="1"/>
</dbReference>
<dbReference type="SMART" id="SM00665">
    <property type="entry name" value="B561"/>
    <property type="match status" value="1"/>
</dbReference>
<dbReference type="SMART" id="SM00664">
    <property type="entry name" value="DoH"/>
    <property type="match status" value="1"/>
</dbReference>
<dbReference type="PROSITE" id="PS50939">
    <property type="entry name" value="CYTOCHROME_B561"/>
    <property type="match status" value="1"/>
</dbReference>
<dbReference type="PROSITE" id="PS50836">
    <property type="entry name" value="DOMON"/>
    <property type="match status" value="1"/>
</dbReference>
<protein>
    <recommendedName>
        <fullName>Cytochrome b561 and DOMON domain-containing protein At3g07570</fullName>
    </recommendedName>
    <alternativeName>
        <fullName>Protein b561A.tha11</fullName>
    </alternativeName>
</protein>
<name>B561K_ARATH</name>
<evidence type="ECO:0000250" key="1">
    <source>
        <dbReference type="UniProtKB" id="Q9SWS1"/>
    </source>
</evidence>
<evidence type="ECO:0000255" key="2"/>
<evidence type="ECO:0000255" key="3">
    <source>
        <dbReference type="PROSITE-ProRule" id="PRU00242"/>
    </source>
</evidence>
<evidence type="ECO:0000255" key="4">
    <source>
        <dbReference type="PROSITE-ProRule" id="PRU00246"/>
    </source>
</evidence>
<evidence type="ECO:0000269" key="5">
    <source>
    </source>
</evidence>
<evidence type="ECO:0000269" key="6">
    <source>
    </source>
</evidence>
<evidence type="ECO:0000305" key="7"/>
<reference key="1">
    <citation type="journal article" date="2000" name="Nature">
        <title>Sequence and analysis of chromosome 3 of the plant Arabidopsis thaliana.</title>
        <authorList>
            <person name="Salanoubat M."/>
            <person name="Lemcke K."/>
            <person name="Rieger M."/>
            <person name="Ansorge W."/>
            <person name="Unseld M."/>
            <person name="Fartmann B."/>
            <person name="Valle G."/>
            <person name="Bloecker H."/>
            <person name="Perez-Alonso M."/>
            <person name="Obermaier B."/>
            <person name="Delseny M."/>
            <person name="Boutry M."/>
            <person name="Grivell L.A."/>
            <person name="Mache R."/>
            <person name="Puigdomenech P."/>
            <person name="De Simone V."/>
            <person name="Choisne N."/>
            <person name="Artiguenave F."/>
            <person name="Robert C."/>
            <person name="Brottier P."/>
            <person name="Wincker P."/>
            <person name="Cattolico L."/>
            <person name="Weissenbach J."/>
            <person name="Saurin W."/>
            <person name="Quetier F."/>
            <person name="Schaefer M."/>
            <person name="Mueller-Auer S."/>
            <person name="Gabel C."/>
            <person name="Fuchs M."/>
            <person name="Benes V."/>
            <person name="Wurmbach E."/>
            <person name="Drzonek H."/>
            <person name="Erfle H."/>
            <person name="Jordan N."/>
            <person name="Bangert S."/>
            <person name="Wiedelmann R."/>
            <person name="Kranz H."/>
            <person name="Voss H."/>
            <person name="Holland R."/>
            <person name="Brandt P."/>
            <person name="Nyakatura G."/>
            <person name="Vezzi A."/>
            <person name="D'Angelo M."/>
            <person name="Pallavicini A."/>
            <person name="Toppo S."/>
            <person name="Simionati B."/>
            <person name="Conrad A."/>
            <person name="Hornischer K."/>
            <person name="Kauer G."/>
            <person name="Loehnert T.-H."/>
            <person name="Nordsiek G."/>
            <person name="Reichelt J."/>
            <person name="Scharfe M."/>
            <person name="Schoen O."/>
            <person name="Bargues M."/>
            <person name="Terol J."/>
            <person name="Climent J."/>
            <person name="Navarro P."/>
            <person name="Collado C."/>
            <person name="Perez-Perez A."/>
            <person name="Ottenwaelder B."/>
            <person name="Duchemin D."/>
            <person name="Cooke R."/>
            <person name="Laudie M."/>
            <person name="Berger-Llauro C."/>
            <person name="Purnelle B."/>
            <person name="Masuy D."/>
            <person name="de Haan M."/>
            <person name="Maarse A.C."/>
            <person name="Alcaraz J.-P."/>
            <person name="Cottet A."/>
            <person name="Casacuberta E."/>
            <person name="Monfort A."/>
            <person name="Argiriou A."/>
            <person name="Flores M."/>
            <person name="Liguori R."/>
            <person name="Vitale D."/>
            <person name="Mannhaupt G."/>
            <person name="Haase D."/>
            <person name="Schoof H."/>
            <person name="Rudd S."/>
            <person name="Zaccaria P."/>
            <person name="Mewes H.-W."/>
            <person name="Mayer K.F.X."/>
            <person name="Kaul S."/>
            <person name="Town C.D."/>
            <person name="Koo H.L."/>
            <person name="Tallon L.J."/>
            <person name="Jenkins J."/>
            <person name="Rooney T."/>
            <person name="Rizzo M."/>
            <person name="Walts A."/>
            <person name="Utterback T."/>
            <person name="Fujii C.Y."/>
            <person name="Shea T.P."/>
            <person name="Creasy T.H."/>
            <person name="Haas B."/>
            <person name="Maiti R."/>
            <person name="Wu D."/>
            <person name="Peterson J."/>
            <person name="Van Aken S."/>
            <person name="Pai G."/>
            <person name="Militscher J."/>
            <person name="Sellers P."/>
            <person name="Gill J.E."/>
            <person name="Feldblyum T.V."/>
            <person name="Preuss D."/>
            <person name="Lin X."/>
            <person name="Nierman W.C."/>
            <person name="Salzberg S.L."/>
            <person name="White O."/>
            <person name="Venter J.C."/>
            <person name="Fraser C.M."/>
            <person name="Kaneko T."/>
            <person name="Nakamura Y."/>
            <person name="Sato S."/>
            <person name="Kato T."/>
            <person name="Asamizu E."/>
            <person name="Sasamoto S."/>
            <person name="Kimura T."/>
            <person name="Idesawa K."/>
            <person name="Kawashima K."/>
            <person name="Kishida Y."/>
            <person name="Kiyokawa C."/>
            <person name="Kohara M."/>
            <person name="Matsumoto M."/>
            <person name="Matsuno A."/>
            <person name="Muraki A."/>
            <person name="Nakayama S."/>
            <person name="Nakazaki N."/>
            <person name="Shinpo S."/>
            <person name="Takeuchi C."/>
            <person name="Wada T."/>
            <person name="Watanabe A."/>
            <person name="Yamada M."/>
            <person name="Yasuda M."/>
            <person name="Tabata S."/>
        </authorList>
    </citation>
    <scope>NUCLEOTIDE SEQUENCE [LARGE SCALE GENOMIC DNA]</scope>
    <source>
        <strain>cv. Columbia</strain>
    </source>
</reference>
<reference key="2">
    <citation type="journal article" date="2017" name="Plant J.">
        <title>Araport11: a complete reannotation of the Arabidopsis thaliana reference genome.</title>
        <authorList>
            <person name="Cheng C.Y."/>
            <person name="Krishnakumar V."/>
            <person name="Chan A.P."/>
            <person name="Thibaud-Nissen F."/>
            <person name="Schobel S."/>
            <person name="Town C.D."/>
        </authorList>
    </citation>
    <scope>GENOME REANNOTATION</scope>
    <source>
        <strain>cv. Columbia</strain>
    </source>
</reference>
<reference key="3">
    <citation type="submission" date="2006-07" db="EMBL/GenBank/DDBJ databases">
        <title>Large-scale analysis of RIKEN Arabidopsis full-length (RAFL) cDNAs.</title>
        <authorList>
            <person name="Totoki Y."/>
            <person name="Seki M."/>
            <person name="Ishida J."/>
            <person name="Nakajima M."/>
            <person name="Enju A."/>
            <person name="Kamiya A."/>
            <person name="Narusaka M."/>
            <person name="Shin-i T."/>
            <person name="Nakagawa M."/>
            <person name="Sakamoto N."/>
            <person name="Oishi K."/>
            <person name="Kohara Y."/>
            <person name="Kobayashi M."/>
            <person name="Toyoda A."/>
            <person name="Sakaki Y."/>
            <person name="Sakurai T."/>
            <person name="Iida K."/>
            <person name="Akiyama K."/>
            <person name="Satou M."/>
            <person name="Toyoda T."/>
            <person name="Konagaya A."/>
            <person name="Carninci P."/>
            <person name="Kawai J."/>
            <person name="Hayashizaki Y."/>
            <person name="Shinozaki K."/>
        </authorList>
    </citation>
    <scope>NUCLEOTIDE SEQUENCE [LARGE SCALE MRNA]</scope>
    <source>
        <strain>cv. Columbia</strain>
    </source>
</reference>
<reference key="4">
    <citation type="journal article" date="2004" name="J. Plant Physiol.">
        <title>Analysis of an Arabidopsis thaliana protein family, structurally related to cytochromes b561 and potentially involved in catecholamine biochemistry in plants.</title>
        <authorList>
            <person name="Verelst W."/>
            <person name="Asard H."/>
        </authorList>
    </citation>
    <scope>DOMAIN</scope>
    <scope>FUNCTION</scope>
</reference>
<reference key="5">
    <citation type="journal article" date="2005" name="Biochim. Biophys. Acta">
        <title>Cytochrome b561 protein family: expanding roles and versatile transmembrane electron transfer abilities as predicted by a new classification system and protein sequence motif analyses.</title>
        <authorList>
            <person name="Tsubaki M."/>
            <person name="Takeuchi F."/>
            <person name="Nakanishi N."/>
        </authorList>
    </citation>
    <scope>GENE FAMILY</scope>
    <scope>NOMENCLATURE</scope>
</reference>
<reference key="6">
    <citation type="journal article" date="2009" name="Plant Physiol.">
        <title>Auxin-responsive genes AIR12 code for a new family of plasma membrane b-type cytochromes specific to flowering plants.</title>
        <authorList>
            <person name="Preger V."/>
            <person name="Tango N."/>
            <person name="Marchand C."/>
            <person name="Lemaire S.D."/>
            <person name="Carbonera D."/>
            <person name="Di Valentin M."/>
            <person name="Costa A."/>
            <person name="Pupillo P."/>
            <person name="Trost P."/>
        </authorList>
    </citation>
    <scope>DOMAIN</scope>
</reference>
<reference key="7">
    <citation type="journal article" date="2013" name="Antioxid. Redox Signal.">
        <title>Cytochromes b561: ascorbate-mediated trans-membrane electron transport.</title>
        <authorList>
            <person name="Asard H."/>
            <person name="Barbaro R."/>
            <person name="Trost P."/>
            <person name="Berczi A."/>
        </authorList>
    </citation>
    <scope>REVIEW</scope>
</reference>
<proteinExistence type="evidence at transcript level"/>
<accession>Q0WRW8</accession>
<accession>Q9SSF3</accession>
<keyword id="KW-0249">Electron transport</keyword>
<keyword id="KW-0349">Heme</keyword>
<keyword id="KW-0408">Iron</keyword>
<keyword id="KW-0472">Membrane</keyword>
<keyword id="KW-0479">Metal-binding</keyword>
<keyword id="KW-1185">Reference proteome</keyword>
<keyword id="KW-0732">Signal</keyword>
<keyword id="KW-0812">Transmembrane</keyword>
<keyword id="KW-1133">Transmembrane helix</keyword>
<keyword id="KW-0813">Transport</keyword>
<feature type="signal peptide" evidence="2">
    <location>
        <begin position="1"/>
        <end position="22"/>
    </location>
</feature>
<feature type="chain" id="PRO_0000430479" description="Cytochrome b561 and DOMON domain-containing protein At3g07570">
    <location>
        <begin position="23"/>
        <end position="369"/>
    </location>
</feature>
<feature type="transmembrane region" description="Helical; Name=1" evidence="2">
    <location>
        <begin position="212"/>
        <end position="232"/>
    </location>
</feature>
<feature type="transmembrane region" description="Helical; Name=2" evidence="2">
    <location>
        <begin position="247"/>
        <end position="267"/>
    </location>
</feature>
<feature type="transmembrane region" description="Helical; Name=3" evidence="2">
    <location>
        <begin position="279"/>
        <end position="299"/>
    </location>
</feature>
<feature type="transmembrane region" description="Helical; Name=4" evidence="2">
    <location>
        <begin position="321"/>
        <end position="341"/>
    </location>
</feature>
<feature type="transmembrane region" description="Helical; Name=5" evidence="2">
    <location>
        <begin position="343"/>
        <end position="363"/>
    </location>
</feature>
<feature type="domain" description="DOMON" evidence="4">
    <location>
        <begin position="55"/>
        <end position="167"/>
    </location>
</feature>
<feature type="domain" description="Cytochrome b561" evidence="3">
    <location>
        <begin position="174"/>
        <end position="369"/>
    </location>
</feature>
<feature type="binding site" description="axial binding residue" evidence="1">
    <location>
        <position position="213"/>
    </location>
    <ligand>
        <name>heme b</name>
        <dbReference type="ChEBI" id="CHEBI:60344"/>
        <label>1</label>
    </ligand>
    <ligandPart>
        <name>Fe</name>
        <dbReference type="ChEBI" id="CHEBI:18248"/>
    </ligandPart>
</feature>
<feature type="binding site" description="axial binding residue" evidence="1">
    <location>
        <position position="246"/>
    </location>
    <ligand>
        <name>heme b</name>
        <dbReference type="ChEBI" id="CHEBI:60344"/>
        <label>2</label>
    </ligand>
    <ligandPart>
        <name>Fe</name>
        <dbReference type="ChEBI" id="CHEBI:18248"/>
    </ligandPart>
</feature>
<feature type="binding site" description="axial binding residue" evidence="1">
    <location>
        <position position="279"/>
    </location>
    <ligand>
        <name>heme b</name>
        <dbReference type="ChEBI" id="CHEBI:60344"/>
        <label>1</label>
    </ligand>
    <ligandPart>
        <name>Fe</name>
        <dbReference type="ChEBI" id="CHEBI:18248"/>
    </ligandPart>
</feature>
<feature type="binding site" description="axial binding residue" evidence="1">
    <location>
        <position position="315"/>
    </location>
    <ligand>
        <name>heme b</name>
        <dbReference type="ChEBI" id="CHEBI:60344"/>
        <label>2</label>
    </ligand>
    <ligandPart>
        <name>Fe</name>
        <dbReference type="ChEBI" id="CHEBI:18248"/>
    </ligandPart>
</feature>
<sequence>MKLYSVSIIIFVLIALSTIVNAQQAATDSCNSTLPLNDLTFNTSLLQCTEAWTPQNFILRYARTAENTWSFILSAPDSSAFIGIGFSTNGQMIGSSAIVGWIPSDGGSGTVKPYLLGGKSPGEVNPDQGDLTIVNGSLKIESVSSRLYMRFQLTATLPRQSLLYAVGPAGFFPSSPDFRLREHRFVTTTTINYNTGSQSVVKVSPHSKLKKTHGLMNMFGWGILIIVGAIVARHMKQWDPTWFYAHIALQTTGFLLGLTGVICGLVLENRLKANNVSKHKGLGITILVMGVLQMLALLARPDKQSKYRKYWNWYHHNIGRLLIILAISNIFYGIHLAKAGTSWNGGYGFAVAVLALTAIGLEVRKFLKK</sequence>
<gene>
    <name type="ordered locus">At3g07570</name>
    <name type="ORF">MLP3.2</name>
</gene>
<organism>
    <name type="scientific">Arabidopsis thaliana</name>
    <name type="common">Mouse-ear cress</name>
    <dbReference type="NCBI Taxonomy" id="3702"/>
    <lineage>
        <taxon>Eukaryota</taxon>
        <taxon>Viridiplantae</taxon>
        <taxon>Streptophyta</taxon>
        <taxon>Embryophyta</taxon>
        <taxon>Tracheophyta</taxon>
        <taxon>Spermatophyta</taxon>
        <taxon>Magnoliopsida</taxon>
        <taxon>eudicotyledons</taxon>
        <taxon>Gunneridae</taxon>
        <taxon>Pentapetalae</taxon>
        <taxon>rosids</taxon>
        <taxon>malvids</taxon>
        <taxon>Brassicales</taxon>
        <taxon>Brassicaceae</taxon>
        <taxon>Camelineae</taxon>
        <taxon>Arabidopsis</taxon>
    </lineage>
</organism>